<dbReference type="EC" id="2.1.3.2" evidence="1"/>
<dbReference type="EMBL" id="CP000116">
    <property type="protein sequence ID" value="AAZ98535.1"/>
    <property type="molecule type" value="Genomic_DNA"/>
</dbReference>
<dbReference type="RefSeq" id="WP_011313094.1">
    <property type="nucleotide sequence ID" value="NC_007404.1"/>
</dbReference>
<dbReference type="SMR" id="Q3SFS1"/>
<dbReference type="STRING" id="292415.Tbd_2582"/>
<dbReference type="KEGG" id="tbd:Tbd_2582"/>
<dbReference type="eggNOG" id="COG0540">
    <property type="taxonomic scope" value="Bacteria"/>
</dbReference>
<dbReference type="HOGENOM" id="CLU_043846_2_0_4"/>
<dbReference type="OrthoDB" id="9774690at2"/>
<dbReference type="UniPathway" id="UPA00070">
    <property type="reaction ID" value="UER00116"/>
</dbReference>
<dbReference type="Proteomes" id="UP000008291">
    <property type="component" value="Chromosome"/>
</dbReference>
<dbReference type="GO" id="GO:0005829">
    <property type="term" value="C:cytosol"/>
    <property type="evidence" value="ECO:0007669"/>
    <property type="project" value="TreeGrafter"/>
</dbReference>
<dbReference type="GO" id="GO:0016597">
    <property type="term" value="F:amino acid binding"/>
    <property type="evidence" value="ECO:0007669"/>
    <property type="project" value="InterPro"/>
</dbReference>
<dbReference type="GO" id="GO:0004070">
    <property type="term" value="F:aspartate carbamoyltransferase activity"/>
    <property type="evidence" value="ECO:0007669"/>
    <property type="project" value="UniProtKB-UniRule"/>
</dbReference>
<dbReference type="GO" id="GO:0006207">
    <property type="term" value="P:'de novo' pyrimidine nucleobase biosynthetic process"/>
    <property type="evidence" value="ECO:0007669"/>
    <property type="project" value="InterPro"/>
</dbReference>
<dbReference type="GO" id="GO:0044205">
    <property type="term" value="P:'de novo' UMP biosynthetic process"/>
    <property type="evidence" value="ECO:0007669"/>
    <property type="project" value="UniProtKB-UniRule"/>
</dbReference>
<dbReference type="GO" id="GO:0006520">
    <property type="term" value="P:amino acid metabolic process"/>
    <property type="evidence" value="ECO:0007669"/>
    <property type="project" value="InterPro"/>
</dbReference>
<dbReference type="FunFam" id="3.40.50.1370:FF:000006">
    <property type="entry name" value="Aspartate carbamoyltransferase"/>
    <property type="match status" value="1"/>
</dbReference>
<dbReference type="FunFam" id="3.40.50.1370:FF:000007">
    <property type="entry name" value="Aspartate carbamoyltransferase"/>
    <property type="match status" value="1"/>
</dbReference>
<dbReference type="Gene3D" id="3.40.50.1370">
    <property type="entry name" value="Aspartate/ornithine carbamoyltransferase"/>
    <property type="match status" value="2"/>
</dbReference>
<dbReference type="HAMAP" id="MF_00001">
    <property type="entry name" value="Asp_carb_tr"/>
    <property type="match status" value="1"/>
</dbReference>
<dbReference type="InterPro" id="IPR006132">
    <property type="entry name" value="Asp/Orn_carbamoyltranf_P-bd"/>
</dbReference>
<dbReference type="InterPro" id="IPR006130">
    <property type="entry name" value="Asp/Orn_carbamoylTrfase"/>
</dbReference>
<dbReference type="InterPro" id="IPR036901">
    <property type="entry name" value="Asp/Orn_carbamoylTrfase_sf"/>
</dbReference>
<dbReference type="InterPro" id="IPR002082">
    <property type="entry name" value="Asp_carbamoyltransf"/>
</dbReference>
<dbReference type="InterPro" id="IPR006131">
    <property type="entry name" value="Asp_carbamoyltransf_Asp/Orn-bd"/>
</dbReference>
<dbReference type="NCBIfam" id="TIGR00670">
    <property type="entry name" value="asp_carb_tr"/>
    <property type="match status" value="1"/>
</dbReference>
<dbReference type="NCBIfam" id="NF002032">
    <property type="entry name" value="PRK00856.1"/>
    <property type="match status" value="1"/>
</dbReference>
<dbReference type="PANTHER" id="PTHR45753:SF6">
    <property type="entry name" value="ASPARTATE CARBAMOYLTRANSFERASE"/>
    <property type="match status" value="1"/>
</dbReference>
<dbReference type="PANTHER" id="PTHR45753">
    <property type="entry name" value="ORNITHINE CARBAMOYLTRANSFERASE, MITOCHONDRIAL"/>
    <property type="match status" value="1"/>
</dbReference>
<dbReference type="Pfam" id="PF00185">
    <property type="entry name" value="OTCace"/>
    <property type="match status" value="1"/>
</dbReference>
<dbReference type="Pfam" id="PF02729">
    <property type="entry name" value="OTCace_N"/>
    <property type="match status" value="1"/>
</dbReference>
<dbReference type="PRINTS" id="PR00100">
    <property type="entry name" value="AOTCASE"/>
</dbReference>
<dbReference type="PRINTS" id="PR00101">
    <property type="entry name" value="ATCASE"/>
</dbReference>
<dbReference type="SUPFAM" id="SSF53671">
    <property type="entry name" value="Aspartate/ornithine carbamoyltransferase"/>
    <property type="match status" value="1"/>
</dbReference>
<dbReference type="PROSITE" id="PS00097">
    <property type="entry name" value="CARBAMOYLTRANSFERASE"/>
    <property type="match status" value="1"/>
</dbReference>
<proteinExistence type="inferred from homology"/>
<sequence length="317" mass="34349">MNPQLTPDGRLRHLLTLDGLPRATLTHILDTAESFMDVGEREVKKVPLLRGKSIFNLFFEPSTRTRTTFEIAAKRLSADVVNLNIATSSQTKGEAILDTVDNLSAMHADMFIVRHSQSGAAHFIARHVAPHISVVNAGDGRHAHPTQGLLDMFTIRRFKGEFHNLTVAIVGDVLHSRVARSQIHALTTLGVPEVRVIGPKTLLPTGVEQLGVKVFHDMAAGLAGCDVVIMLRLQNERMKGARLPSAQEYFKFFGLTPEKLALAKPDAIVMHPGPMNRGVEIASEVADGPQSVILPQVTYGIAVRMAVMALLAGGAST</sequence>
<gene>
    <name evidence="1" type="primary">pyrB</name>
    <name type="ordered locus">Tbd_2582</name>
</gene>
<reference key="1">
    <citation type="journal article" date="2006" name="J. Bacteriol.">
        <title>The genome sequence of the obligately chemolithoautotrophic, facultatively anaerobic bacterium Thiobacillus denitrificans.</title>
        <authorList>
            <person name="Beller H.R."/>
            <person name="Chain P.S."/>
            <person name="Letain T.E."/>
            <person name="Chakicherla A."/>
            <person name="Larimer F.W."/>
            <person name="Richardson P.M."/>
            <person name="Coleman M.A."/>
            <person name="Wood A.P."/>
            <person name="Kelly D.P."/>
        </authorList>
    </citation>
    <scope>NUCLEOTIDE SEQUENCE [LARGE SCALE GENOMIC DNA]</scope>
    <source>
        <strain>ATCC 25259 / T1</strain>
    </source>
</reference>
<name>PYRB_THIDA</name>
<keyword id="KW-0665">Pyrimidine biosynthesis</keyword>
<keyword id="KW-1185">Reference proteome</keyword>
<keyword id="KW-0808">Transferase</keyword>
<comment type="function">
    <text evidence="1">Catalyzes the condensation of carbamoyl phosphate and aspartate to form carbamoyl aspartate and inorganic phosphate, the committed step in the de novo pyrimidine nucleotide biosynthesis pathway.</text>
</comment>
<comment type="catalytic activity">
    <reaction evidence="1">
        <text>carbamoyl phosphate + L-aspartate = N-carbamoyl-L-aspartate + phosphate + H(+)</text>
        <dbReference type="Rhea" id="RHEA:20013"/>
        <dbReference type="ChEBI" id="CHEBI:15378"/>
        <dbReference type="ChEBI" id="CHEBI:29991"/>
        <dbReference type="ChEBI" id="CHEBI:32814"/>
        <dbReference type="ChEBI" id="CHEBI:43474"/>
        <dbReference type="ChEBI" id="CHEBI:58228"/>
        <dbReference type="EC" id="2.1.3.2"/>
    </reaction>
</comment>
<comment type="pathway">
    <text evidence="1">Pyrimidine metabolism; UMP biosynthesis via de novo pathway; (S)-dihydroorotate from bicarbonate: step 2/3.</text>
</comment>
<comment type="subunit">
    <text evidence="1">Heterododecamer (2C3:3R2) of six catalytic PyrB chains organized as two trimers (C3), and six regulatory PyrI chains organized as three dimers (R2).</text>
</comment>
<comment type="similarity">
    <text evidence="1">Belongs to the aspartate/ornithine carbamoyltransferase superfamily. ATCase family.</text>
</comment>
<protein>
    <recommendedName>
        <fullName evidence="1">Aspartate carbamoyltransferase catalytic subunit</fullName>
        <ecNumber evidence="1">2.1.3.2</ecNumber>
    </recommendedName>
    <alternativeName>
        <fullName evidence="1">Aspartate transcarbamylase</fullName>
        <shortName evidence="1">ATCase</shortName>
    </alternativeName>
</protein>
<evidence type="ECO:0000255" key="1">
    <source>
        <dbReference type="HAMAP-Rule" id="MF_00001"/>
    </source>
</evidence>
<feature type="chain" id="PRO_0000321176" description="Aspartate carbamoyltransferase catalytic subunit">
    <location>
        <begin position="1"/>
        <end position="317"/>
    </location>
</feature>
<feature type="binding site" evidence="1">
    <location>
        <position position="64"/>
    </location>
    <ligand>
        <name>carbamoyl phosphate</name>
        <dbReference type="ChEBI" id="CHEBI:58228"/>
    </ligand>
</feature>
<feature type="binding site" evidence="1">
    <location>
        <position position="65"/>
    </location>
    <ligand>
        <name>carbamoyl phosphate</name>
        <dbReference type="ChEBI" id="CHEBI:58228"/>
    </ligand>
</feature>
<feature type="binding site" evidence="1">
    <location>
        <position position="92"/>
    </location>
    <ligand>
        <name>L-aspartate</name>
        <dbReference type="ChEBI" id="CHEBI:29991"/>
    </ligand>
</feature>
<feature type="binding site" evidence="1">
    <location>
        <position position="114"/>
    </location>
    <ligand>
        <name>carbamoyl phosphate</name>
        <dbReference type="ChEBI" id="CHEBI:58228"/>
    </ligand>
</feature>
<feature type="binding site" evidence="1">
    <location>
        <position position="144"/>
    </location>
    <ligand>
        <name>carbamoyl phosphate</name>
        <dbReference type="ChEBI" id="CHEBI:58228"/>
    </ligand>
</feature>
<feature type="binding site" evidence="1">
    <location>
        <position position="147"/>
    </location>
    <ligand>
        <name>carbamoyl phosphate</name>
        <dbReference type="ChEBI" id="CHEBI:58228"/>
    </ligand>
</feature>
<feature type="binding site" evidence="1">
    <location>
        <position position="177"/>
    </location>
    <ligand>
        <name>L-aspartate</name>
        <dbReference type="ChEBI" id="CHEBI:29991"/>
    </ligand>
</feature>
<feature type="binding site" evidence="1">
    <location>
        <position position="232"/>
    </location>
    <ligand>
        <name>L-aspartate</name>
        <dbReference type="ChEBI" id="CHEBI:29991"/>
    </ligand>
</feature>
<feature type="binding site" evidence="1">
    <location>
        <position position="273"/>
    </location>
    <ligand>
        <name>carbamoyl phosphate</name>
        <dbReference type="ChEBI" id="CHEBI:58228"/>
    </ligand>
</feature>
<feature type="binding site" evidence="1">
    <location>
        <position position="274"/>
    </location>
    <ligand>
        <name>carbamoyl phosphate</name>
        <dbReference type="ChEBI" id="CHEBI:58228"/>
    </ligand>
</feature>
<organism>
    <name type="scientific">Thiobacillus denitrificans (strain ATCC 25259 / T1)</name>
    <dbReference type="NCBI Taxonomy" id="292415"/>
    <lineage>
        <taxon>Bacteria</taxon>
        <taxon>Pseudomonadati</taxon>
        <taxon>Pseudomonadota</taxon>
        <taxon>Betaproteobacteria</taxon>
        <taxon>Nitrosomonadales</taxon>
        <taxon>Thiobacillaceae</taxon>
        <taxon>Thiobacillus</taxon>
    </lineage>
</organism>
<accession>Q3SFS1</accession>